<sequence length="172" mass="18664">MALRIEDKKAIVAEVAEQVSSALSAAVADYRGLTVNEMTSLRKQARESGVYLRVVRNNLARLAIKGTDFECLGDALKGPLVLALSKDEPGAAAKLFKSFQKDHNAFEVKNLAMSGELFGPEKLDDFAKLPTREEALATLLNVMQAPVTKFVRTLNEIPSQAVRVFAAVGDSK</sequence>
<feature type="chain" id="PRO_1000079543" description="Large ribosomal subunit protein uL10">
    <location>
        <begin position="1"/>
        <end position="172"/>
    </location>
</feature>
<protein>
    <recommendedName>
        <fullName evidence="1">Large ribosomal subunit protein uL10</fullName>
    </recommendedName>
    <alternativeName>
        <fullName evidence="2">50S ribosomal protein L10</fullName>
    </alternativeName>
</protein>
<dbReference type="EMBL" id="CP000937">
    <property type="protein sequence ID" value="ABZ87266.1"/>
    <property type="molecule type" value="Genomic_DNA"/>
</dbReference>
<dbReference type="SMR" id="B0TX08"/>
<dbReference type="KEGG" id="fph:Fphi_1044"/>
<dbReference type="eggNOG" id="COG0244">
    <property type="taxonomic scope" value="Bacteria"/>
</dbReference>
<dbReference type="HOGENOM" id="CLU_092227_0_1_6"/>
<dbReference type="GO" id="GO:1990904">
    <property type="term" value="C:ribonucleoprotein complex"/>
    <property type="evidence" value="ECO:0007669"/>
    <property type="project" value="UniProtKB-KW"/>
</dbReference>
<dbReference type="GO" id="GO:0005840">
    <property type="term" value="C:ribosome"/>
    <property type="evidence" value="ECO:0007669"/>
    <property type="project" value="UniProtKB-KW"/>
</dbReference>
<dbReference type="GO" id="GO:0070180">
    <property type="term" value="F:large ribosomal subunit rRNA binding"/>
    <property type="evidence" value="ECO:0007669"/>
    <property type="project" value="UniProtKB-UniRule"/>
</dbReference>
<dbReference type="GO" id="GO:0006412">
    <property type="term" value="P:translation"/>
    <property type="evidence" value="ECO:0007669"/>
    <property type="project" value="UniProtKB-UniRule"/>
</dbReference>
<dbReference type="CDD" id="cd05797">
    <property type="entry name" value="Ribosomal_L10"/>
    <property type="match status" value="1"/>
</dbReference>
<dbReference type="Gene3D" id="3.30.70.1730">
    <property type="match status" value="1"/>
</dbReference>
<dbReference type="Gene3D" id="6.10.250.290">
    <property type="match status" value="1"/>
</dbReference>
<dbReference type="HAMAP" id="MF_00362">
    <property type="entry name" value="Ribosomal_uL10"/>
    <property type="match status" value="1"/>
</dbReference>
<dbReference type="InterPro" id="IPR001790">
    <property type="entry name" value="Ribosomal_uL10"/>
</dbReference>
<dbReference type="InterPro" id="IPR043141">
    <property type="entry name" value="Ribosomal_uL10-like_sf"/>
</dbReference>
<dbReference type="InterPro" id="IPR022973">
    <property type="entry name" value="Ribosomal_uL10_bac"/>
</dbReference>
<dbReference type="InterPro" id="IPR047865">
    <property type="entry name" value="Ribosomal_uL10_bac_type"/>
</dbReference>
<dbReference type="NCBIfam" id="NF000955">
    <property type="entry name" value="PRK00099.1-1"/>
    <property type="match status" value="1"/>
</dbReference>
<dbReference type="PANTHER" id="PTHR11560">
    <property type="entry name" value="39S RIBOSOMAL PROTEIN L10, MITOCHONDRIAL"/>
    <property type="match status" value="1"/>
</dbReference>
<dbReference type="Pfam" id="PF00466">
    <property type="entry name" value="Ribosomal_L10"/>
    <property type="match status" value="1"/>
</dbReference>
<dbReference type="SUPFAM" id="SSF160369">
    <property type="entry name" value="Ribosomal protein L10-like"/>
    <property type="match status" value="1"/>
</dbReference>
<reference key="1">
    <citation type="submission" date="2007-12" db="EMBL/GenBank/DDBJ databases">
        <title>Complete sequence of chromosome of Francisella philomiragia subsp. philomiragia ATCC 25017.</title>
        <authorList>
            <consortium name="US DOE Joint Genome Institute"/>
            <person name="Copeland A."/>
            <person name="Lucas S."/>
            <person name="Lapidus A."/>
            <person name="Barry K."/>
            <person name="Detter J.C."/>
            <person name="Glavina del Rio T."/>
            <person name="Hammon N."/>
            <person name="Israni S."/>
            <person name="Dalin E."/>
            <person name="Tice H."/>
            <person name="Pitluck S."/>
            <person name="Chain P."/>
            <person name="Malfatti S."/>
            <person name="Shin M."/>
            <person name="Vergez L."/>
            <person name="Schmutz J."/>
            <person name="Larimer F."/>
            <person name="Land M."/>
            <person name="Hauser L."/>
            <person name="Richardson P."/>
        </authorList>
    </citation>
    <scope>NUCLEOTIDE SEQUENCE [LARGE SCALE GENOMIC DNA]</scope>
    <source>
        <strain>ATCC 25017 / CCUG 19701 / FSC 153 / O#319-036</strain>
    </source>
</reference>
<comment type="function">
    <text evidence="1">Forms part of the ribosomal stalk, playing a central role in the interaction of the ribosome with GTP-bound translation factors.</text>
</comment>
<comment type="subunit">
    <text evidence="1">Part of the ribosomal stalk of the 50S ribosomal subunit. The N-terminus interacts with L11 and the large rRNA to form the base of the stalk. The C-terminus forms an elongated spine to which L12 dimers bind in a sequential fashion forming a multimeric L10(L12)X complex.</text>
</comment>
<comment type="similarity">
    <text evidence="1">Belongs to the universal ribosomal protein uL10 family.</text>
</comment>
<gene>
    <name evidence="1" type="primary">rplJ</name>
    <name type="ordered locus">Fphi_1044</name>
</gene>
<accession>B0TX08</accession>
<organism>
    <name type="scientific">Francisella philomiragia subsp. philomiragia (strain ATCC 25017 / CCUG 19701 / FSC 153 / O#319-036)</name>
    <dbReference type="NCBI Taxonomy" id="484022"/>
    <lineage>
        <taxon>Bacteria</taxon>
        <taxon>Pseudomonadati</taxon>
        <taxon>Pseudomonadota</taxon>
        <taxon>Gammaproteobacteria</taxon>
        <taxon>Thiotrichales</taxon>
        <taxon>Francisellaceae</taxon>
        <taxon>Francisella</taxon>
    </lineage>
</organism>
<proteinExistence type="inferred from homology"/>
<keyword id="KW-0687">Ribonucleoprotein</keyword>
<keyword id="KW-0689">Ribosomal protein</keyword>
<keyword id="KW-0694">RNA-binding</keyword>
<keyword id="KW-0699">rRNA-binding</keyword>
<name>RL10_FRAP2</name>
<evidence type="ECO:0000255" key="1">
    <source>
        <dbReference type="HAMAP-Rule" id="MF_00362"/>
    </source>
</evidence>
<evidence type="ECO:0000305" key="2"/>